<proteinExistence type="inferred from homology"/>
<gene>
    <name type="primary">c3ar1</name>
</gene>
<feature type="chain" id="PRO_0000343793" description="C3a anaphylatoxin chemotactic receptor">
    <location>
        <begin position="1"/>
        <end position="361"/>
    </location>
</feature>
<feature type="topological domain" description="Extracellular" evidence="2">
    <location>
        <begin position="1"/>
        <end position="64"/>
    </location>
</feature>
<feature type="transmembrane region" description="Helical; Name=1" evidence="2">
    <location>
        <begin position="65"/>
        <end position="85"/>
    </location>
</feature>
<feature type="topological domain" description="Cytoplasmic" evidence="2">
    <location>
        <begin position="86"/>
        <end position="96"/>
    </location>
</feature>
<feature type="transmembrane region" description="Helical; Name=2" evidence="2">
    <location>
        <begin position="97"/>
        <end position="117"/>
    </location>
</feature>
<feature type="topological domain" description="Extracellular" evidence="2">
    <location>
        <begin position="118"/>
        <end position="134"/>
    </location>
</feature>
<feature type="transmembrane region" description="Helical; Name=3" evidence="2">
    <location>
        <begin position="135"/>
        <end position="155"/>
    </location>
</feature>
<feature type="topological domain" description="Cytoplasmic" evidence="2">
    <location>
        <begin position="156"/>
        <end position="177"/>
    </location>
</feature>
<feature type="transmembrane region" description="Helical; Name=4" evidence="2">
    <location>
        <begin position="178"/>
        <end position="198"/>
    </location>
</feature>
<feature type="topological domain" description="Extracellular" evidence="2">
    <location>
        <begin position="199"/>
        <end position="224"/>
    </location>
</feature>
<feature type="transmembrane region" description="Helical; Name=5" evidence="2">
    <location>
        <begin position="225"/>
        <end position="245"/>
    </location>
</feature>
<feature type="topological domain" description="Cytoplasmic" evidence="2">
    <location>
        <begin position="246"/>
        <end position="262"/>
    </location>
</feature>
<feature type="transmembrane region" description="Helical; Name=6" evidence="2">
    <location>
        <begin position="263"/>
        <end position="283"/>
    </location>
</feature>
<feature type="topological domain" description="Extracellular" evidence="2">
    <location>
        <begin position="284"/>
        <end position="301"/>
    </location>
</feature>
<feature type="transmembrane region" description="Helical; Name=7" evidence="2">
    <location>
        <begin position="302"/>
        <end position="322"/>
    </location>
</feature>
<feature type="topological domain" description="Cytoplasmic" evidence="2">
    <location>
        <begin position="323"/>
        <end position="361"/>
    </location>
</feature>
<feature type="glycosylation site" description="N-linked (GlcNAc...) asparagine" evidence="2">
    <location>
        <position position="36"/>
    </location>
</feature>
<feature type="glycosylation site" description="N-linked (GlcNAc...) asparagine" evidence="2">
    <location>
        <position position="50"/>
    </location>
</feature>
<feature type="disulfide bond" evidence="3">
    <location>
        <begin position="133"/>
        <end position="210"/>
    </location>
</feature>
<organism>
    <name type="scientific">Danio rerio</name>
    <name type="common">Zebrafish</name>
    <name type="synonym">Brachydanio rerio</name>
    <dbReference type="NCBI Taxonomy" id="7955"/>
    <lineage>
        <taxon>Eukaryota</taxon>
        <taxon>Metazoa</taxon>
        <taxon>Chordata</taxon>
        <taxon>Craniata</taxon>
        <taxon>Vertebrata</taxon>
        <taxon>Euteleostomi</taxon>
        <taxon>Actinopterygii</taxon>
        <taxon>Neopterygii</taxon>
        <taxon>Teleostei</taxon>
        <taxon>Ostariophysi</taxon>
        <taxon>Cypriniformes</taxon>
        <taxon>Danionidae</taxon>
        <taxon>Danioninae</taxon>
        <taxon>Danio</taxon>
    </lineage>
</organism>
<evidence type="ECO:0000250" key="1"/>
<evidence type="ECO:0000255" key="2"/>
<evidence type="ECO:0000255" key="3">
    <source>
        <dbReference type="PROSITE-ProRule" id="PRU00521"/>
    </source>
</evidence>
<evidence type="ECO:0000305" key="4"/>
<accession>P0C7U4</accession>
<name>C3AR_DANRE</name>
<protein>
    <recommendedName>
        <fullName>C3a anaphylatoxin chemotactic receptor</fullName>
        <shortName>C3AR</shortName>
        <shortName>C3a-R</shortName>
    </recommendedName>
</protein>
<comment type="function">
    <text evidence="1">Receptor for the chemotactic and inflammatory peptide anaphylatoxin C3a. This receptor stimulates chemotaxis, granule enzyme release and superoxide anion production (By similarity).</text>
</comment>
<comment type="subcellular location">
    <subcellularLocation>
        <location evidence="1">Cell membrane</location>
        <topology evidence="1">Multi-pass membrane protein</topology>
    </subcellularLocation>
</comment>
<comment type="similarity">
    <text evidence="3">Belongs to the G-protein coupled receptor 1 family.</text>
</comment>
<comment type="caution">
    <text evidence="4">Lacks an insertion found in the C3ar family. It remains uncertain whether it belongs to the C3ar or the C5ar family.</text>
</comment>
<dbReference type="EMBL" id="CAAK04012368">
    <property type="status" value="NOT_ANNOTATED_CDS"/>
    <property type="molecule type" value="Genomic_DNA"/>
</dbReference>
<dbReference type="SMR" id="P0C7U4"/>
<dbReference type="FunCoup" id="P0C7U4">
    <property type="interactions" value="51"/>
</dbReference>
<dbReference type="STRING" id="7955.ENSDARP00000040270"/>
<dbReference type="GlyCosmos" id="P0C7U4">
    <property type="glycosylation" value="2 sites, No reported glycans"/>
</dbReference>
<dbReference type="PaxDb" id="7955-ENSDARP00000040270"/>
<dbReference type="eggNOG" id="ENOG502R35Z">
    <property type="taxonomic scope" value="Eukaryota"/>
</dbReference>
<dbReference type="InParanoid" id="P0C7U4"/>
<dbReference type="PhylomeDB" id="P0C7U4"/>
<dbReference type="Proteomes" id="UP000000437">
    <property type="component" value="Unplaced"/>
</dbReference>
<dbReference type="GO" id="GO:0005886">
    <property type="term" value="C:plasma membrane"/>
    <property type="evidence" value="ECO:0000318"/>
    <property type="project" value="GO_Central"/>
</dbReference>
<dbReference type="GO" id="GO:0004878">
    <property type="term" value="F:complement component C5a receptor activity"/>
    <property type="evidence" value="ECO:0000318"/>
    <property type="project" value="GO_Central"/>
</dbReference>
<dbReference type="GO" id="GO:0004930">
    <property type="term" value="F:G protein-coupled receptor activity"/>
    <property type="evidence" value="ECO:0000318"/>
    <property type="project" value="GO_Central"/>
</dbReference>
<dbReference type="GO" id="GO:0006935">
    <property type="term" value="P:chemotaxis"/>
    <property type="evidence" value="ECO:0007669"/>
    <property type="project" value="UniProtKB-KW"/>
</dbReference>
<dbReference type="GO" id="GO:0002430">
    <property type="term" value="P:complement receptor mediated signaling pathway"/>
    <property type="evidence" value="ECO:0000318"/>
    <property type="project" value="GO_Central"/>
</dbReference>
<dbReference type="GO" id="GO:0006954">
    <property type="term" value="P:inflammatory response"/>
    <property type="evidence" value="ECO:0000318"/>
    <property type="project" value="GO_Central"/>
</dbReference>
<dbReference type="GO" id="GO:0007200">
    <property type="term" value="P:phospholipase C-activating G protein-coupled receptor signaling pathway"/>
    <property type="evidence" value="ECO:0000318"/>
    <property type="project" value="GO_Central"/>
</dbReference>
<dbReference type="GO" id="GO:0007204">
    <property type="term" value="P:positive regulation of cytosolic calcium ion concentration"/>
    <property type="evidence" value="ECO:0000318"/>
    <property type="project" value="GO_Central"/>
</dbReference>
<dbReference type="CDD" id="cd15115">
    <property type="entry name" value="7tmA_C3aR"/>
    <property type="match status" value="1"/>
</dbReference>
<dbReference type="FunFam" id="1.20.1070.10:FF:000034">
    <property type="entry name" value="G-protein coupled receptor 1"/>
    <property type="match status" value="1"/>
</dbReference>
<dbReference type="Gene3D" id="1.20.1070.10">
    <property type="entry name" value="Rhodopsin 7-helix transmembrane proteins"/>
    <property type="match status" value="1"/>
</dbReference>
<dbReference type="InterPro" id="IPR000826">
    <property type="entry name" value="Formyl_rcpt-rel"/>
</dbReference>
<dbReference type="InterPro" id="IPR000276">
    <property type="entry name" value="GPCR_Rhodpsn"/>
</dbReference>
<dbReference type="InterPro" id="IPR017452">
    <property type="entry name" value="GPCR_Rhodpsn_7TM"/>
</dbReference>
<dbReference type="PANTHER" id="PTHR24225:SF29">
    <property type="entry name" value="C5A ANAPHYLATOXIN CHEMOTACTIC RECEPTOR 1"/>
    <property type="match status" value="1"/>
</dbReference>
<dbReference type="PANTHER" id="PTHR24225">
    <property type="entry name" value="CHEMOTACTIC RECEPTOR"/>
    <property type="match status" value="1"/>
</dbReference>
<dbReference type="Pfam" id="PF00001">
    <property type="entry name" value="7tm_1"/>
    <property type="match status" value="1"/>
</dbReference>
<dbReference type="PRINTS" id="PR00526">
    <property type="entry name" value="FMETLEUPHER"/>
</dbReference>
<dbReference type="PRINTS" id="PR00237">
    <property type="entry name" value="GPCRRHODOPSN"/>
</dbReference>
<dbReference type="SUPFAM" id="SSF81321">
    <property type="entry name" value="Family A G protein-coupled receptor-like"/>
    <property type="match status" value="1"/>
</dbReference>
<dbReference type="PROSITE" id="PS00237">
    <property type="entry name" value="G_PROTEIN_RECEP_F1_1"/>
    <property type="match status" value="1"/>
</dbReference>
<dbReference type="PROSITE" id="PS50262">
    <property type="entry name" value="G_PROTEIN_RECEP_F1_2"/>
    <property type="match status" value="1"/>
</dbReference>
<reference key="1">
    <citation type="journal article" date="2013" name="Nature">
        <title>The zebrafish reference genome sequence and its relationship to the human genome.</title>
        <authorList>
            <person name="Howe K."/>
            <person name="Clark M.D."/>
            <person name="Torroja C.F."/>
            <person name="Torrance J."/>
            <person name="Berthelot C."/>
            <person name="Muffato M."/>
            <person name="Collins J.E."/>
            <person name="Humphray S."/>
            <person name="McLaren K."/>
            <person name="Matthews L."/>
            <person name="McLaren S."/>
            <person name="Sealy I."/>
            <person name="Caccamo M."/>
            <person name="Churcher C."/>
            <person name="Scott C."/>
            <person name="Barrett J.C."/>
            <person name="Koch R."/>
            <person name="Rauch G.J."/>
            <person name="White S."/>
            <person name="Chow W."/>
            <person name="Kilian B."/>
            <person name="Quintais L.T."/>
            <person name="Guerra-Assuncao J.A."/>
            <person name="Zhou Y."/>
            <person name="Gu Y."/>
            <person name="Yen J."/>
            <person name="Vogel J.H."/>
            <person name="Eyre T."/>
            <person name="Redmond S."/>
            <person name="Banerjee R."/>
            <person name="Chi J."/>
            <person name="Fu B."/>
            <person name="Langley E."/>
            <person name="Maguire S.F."/>
            <person name="Laird G.K."/>
            <person name="Lloyd D."/>
            <person name="Kenyon E."/>
            <person name="Donaldson S."/>
            <person name="Sehra H."/>
            <person name="Almeida-King J."/>
            <person name="Loveland J."/>
            <person name="Trevanion S."/>
            <person name="Jones M."/>
            <person name="Quail M."/>
            <person name="Willey D."/>
            <person name="Hunt A."/>
            <person name="Burton J."/>
            <person name="Sims S."/>
            <person name="McLay K."/>
            <person name="Plumb B."/>
            <person name="Davis J."/>
            <person name="Clee C."/>
            <person name="Oliver K."/>
            <person name="Clark R."/>
            <person name="Riddle C."/>
            <person name="Elliot D."/>
            <person name="Threadgold G."/>
            <person name="Harden G."/>
            <person name="Ware D."/>
            <person name="Begum S."/>
            <person name="Mortimore B."/>
            <person name="Kerry G."/>
            <person name="Heath P."/>
            <person name="Phillimore B."/>
            <person name="Tracey A."/>
            <person name="Corby N."/>
            <person name="Dunn M."/>
            <person name="Johnson C."/>
            <person name="Wood J."/>
            <person name="Clark S."/>
            <person name="Pelan S."/>
            <person name="Griffiths G."/>
            <person name="Smith M."/>
            <person name="Glithero R."/>
            <person name="Howden P."/>
            <person name="Barker N."/>
            <person name="Lloyd C."/>
            <person name="Stevens C."/>
            <person name="Harley J."/>
            <person name="Holt K."/>
            <person name="Panagiotidis G."/>
            <person name="Lovell J."/>
            <person name="Beasley H."/>
            <person name="Henderson C."/>
            <person name="Gordon D."/>
            <person name="Auger K."/>
            <person name="Wright D."/>
            <person name="Collins J."/>
            <person name="Raisen C."/>
            <person name="Dyer L."/>
            <person name="Leung K."/>
            <person name="Robertson L."/>
            <person name="Ambridge K."/>
            <person name="Leongamornlert D."/>
            <person name="McGuire S."/>
            <person name="Gilderthorp R."/>
            <person name="Griffiths C."/>
            <person name="Manthravadi D."/>
            <person name="Nichol S."/>
            <person name="Barker G."/>
            <person name="Whitehead S."/>
            <person name="Kay M."/>
            <person name="Brown J."/>
            <person name="Murnane C."/>
            <person name="Gray E."/>
            <person name="Humphries M."/>
            <person name="Sycamore N."/>
            <person name="Barker D."/>
            <person name="Saunders D."/>
            <person name="Wallis J."/>
            <person name="Babbage A."/>
            <person name="Hammond S."/>
            <person name="Mashreghi-Mohammadi M."/>
            <person name="Barr L."/>
            <person name="Martin S."/>
            <person name="Wray P."/>
            <person name="Ellington A."/>
            <person name="Matthews N."/>
            <person name="Ellwood M."/>
            <person name="Woodmansey R."/>
            <person name="Clark G."/>
            <person name="Cooper J."/>
            <person name="Tromans A."/>
            <person name="Grafham D."/>
            <person name="Skuce C."/>
            <person name="Pandian R."/>
            <person name="Andrews R."/>
            <person name="Harrison E."/>
            <person name="Kimberley A."/>
            <person name="Garnett J."/>
            <person name="Fosker N."/>
            <person name="Hall R."/>
            <person name="Garner P."/>
            <person name="Kelly D."/>
            <person name="Bird C."/>
            <person name="Palmer S."/>
            <person name="Gehring I."/>
            <person name="Berger A."/>
            <person name="Dooley C.M."/>
            <person name="Ersan-Urun Z."/>
            <person name="Eser C."/>
            <person name="Geiger H."/>
            <person name="Geisler M."/>
            <person name="Karotki L."/>
            <person name="Kirn A."/>
            <person name="Konantz J."/>
            <person name="Konantz M."/>
            <person name="Oberlander M."/>
            <person name="Rudolph-Geiger S."/>
            <person name="Teucke M."/>
            <person name="Lanz C."/>
            <person name="Raddatz G."/>
            <person name="Osoegawa K."/>
            <person name="Zhu B."/>
            <person name="Rapp A."/>
            <person name="Widaa S."/>
            <person name="Langford C."/>
            <person name="Yang F."/>
            <person name="Schuster S.C."/>
            <person name="Carter N.P."/>
            <person name="Harrow J."/>
            <person name="Ning Z."/>
            <person name="Herrero J."/>
            <person name="Searle S.M."/>
            <person name="Enright A."/>
            <person name="Geisler R."/>
            <person name="Plasterk R.H."/>
            <person name="Lee C."/>
            <person name="Westerfield M."/>
            <person name="de Jong P.J."/>
            <person name="Zon L.I."/>
            <person name="Postlethwait J.H."/>
            <person name="Nusslein-Volhard C."/>
            <person name="Hubbard T.J."/>
            <person name="Roest Crollius H."/>
            <person name="Rogers J."/>
            <person name="Stemple D.L."/>
        </authorList>
    </citation>
    <scope>NUCLEOTIDE SEQUENCE [LARGE SCALE GENOMIC DNA]</scope>
    <source>
        <strain>Tuebingen</strain>
    </source>
</reference>
<sequence>MQQETQAPPLLLLYARSISKTNYIFRVSAMDENYENFTDAYEEMWGFDANETNTFASSEVRVISLVVYCLTFLLGVPGNSFVIFIAGMKMKRTVNTIWFLNLATADLLCCLSVPLTVAEILLDHHWPYGYAMCKILPSVIVISMFASVFTLNIISLDRFTQVITPVWAQNHRSLLLARLSCVAVWILALLLSLPFMILRRTYEEFNMTVCTFDDDDFTTYGALSIVRFVFGFLIPLMSIVTCYGIIARKLGSRHFRSGRAFRIMLAVIVAFFLCWMPYHVLDLIRSYGGESSSMVALKVDPLAISLAYVNSCLNPVLYVFMGQDFKNKVQLSLRRVFERAFSEEGTQISRSTQSQQVHSVL</sequence>
<keyword id="KW-1003">Cell membrane</keyword>
<keyword id="KW-0145">Chemotaxis</keyword>
<keyword id="KW-1015">Disulfide bond</keyword>
<keyword id="KW-0297">G-protein coupled receptor</keyword>
<keyword id="KW-0325">Glycoprotein</keyword>
<keyword id="KW-0472">Membrane</keyword>
<keyword id="KW-0675">Receptor</keyword>
<keyword id="KW-1185">Reference proteome</keyword>
<keyword id="KW-0807">Transducer</keyword>
<keyword id="KW-0812">Transmembrane</keyword>
<keyword id="KW-1133">Transmembrane helix</keyword>